<accession>Q5RFQ9</accession>
<feature type="transit peptide" description="Mitochondrion" evidence="3">
    <location>
        <begin position="1"/>
        <end position="25"/>
    </location>
</feature>
<feature type="chain" id="PRO_0000356234" description="Mitochondrial potassium channel ATP-binding subunit" evidence="3">
    <location>
        <begin position="26"/>
        <end position="718"/>
    </location>
</feature>
<feature type="transmembrane region" description="Helical" evidence="3 5">
    <location>
        <begin position="128"/>
        <end position="148"/>
    </location>
</feature>
<feature type="transmembrane region" description="Helical" evidence="3 5">
    <location>
        <begin position="179"/>
        <end position="199"/>
    </location>
</feature>
<feature type="transmembrane region" description="Helical" evidence="3 5">
    <location>
        <begin position="279"/>
        <end position="299"/>
    </location>
</feature>
<feature type="domain" description="ABC transmembrane type-1" evidence="5">
    <location>
        <begin position="133"/>
        <end position="420"/>
    </location>
</feature>
<feature type="domain" description="ABC transporter" evidence="4">
    <location>
        <begin position="455"/>
        <end position="692"/>
    </location>
</feature>
<feature type="region of interest" description="Disordered" evidence="6">
    <location>
        <begin position="697"/>
        <end position="718"/>
    </location>
</feature>
<feature type="binding site" evidence="4">
    <location>
        <begin position="490"/>
        <end position="497"/>
    </location>
    <ligand>
        <name>ATP</name>
        <dbReference type="ChEBI" id="CHEBI:30616"/>
    </ligand>
</feature>
<evidence type="ECO:0000250" key="1">
    <source>
        <dbReference type="UniProtKB" id="Q9CXJ4"/>
    </source>
</evidence>
<evidence type="ECO:0000250" key="2">
    <source>
        <dbReference type="UniProtKB" id="Q9NUT2"/>
    </source>
</evidence>
<evidence type="ECO:0000255" key="3"/>
<evidence type="ECO:0000255" key="4">
    <source>
        <dbReference type="PROSITE-ProRule" id="PRU00434"/>
    </source>
</evidence>
<evidence type="ECO:0000255" key="5">
    <source>
        <dbReference type="PROSITE-ProRule" id="PRU00441"/>
    </source>
</evidence>
<evidence type="ECO:0000256" key="6">
    <source>
        <dbReference type="SAM" id="MobiDB-lite"/>
    </source>
</evidence>
<evidence type="ECO:0000305" key="7"/>
<gene>
    <name type="primary">ABCB8</name>
    <name evidence="2" type="synonym">MITOSUR</name>
</gene>
<dbReference type="EMBL" id="CR857093">
    <property type="protein sequence ID" value="CAH89398.1"/>
    <property type="molecule type" value="mRNA"/>
</dbReference>
<dbReference type="RefSeq" id="NP_001124589.1">
    <property type="nucleotide sequence ID" value="NM_001131117.1"/>
</dbReference>
<dbReference type="SMR" id="Q5RFQ9"/>
<dbReference type="FunCoup" id="Q5RFQ9">
    <property type="interactions" value="1152"/>
</dbReference>
<dbReference type="STRING" id="9601.ENSPPYP00000020386"/>
<dbReference type="GeneID" id="100171425"/>
<dbReference type="KEGG" id="pon:100171425"/>
<dbReference type="CTD" id="11194"/>
<dbReference type="eggNOG" id="KOG0058">
    <property type="taxonomic scope" value="Eukaryota"/>
</dbReference>
<dbReference type="InParanoid" id="Q5RFQ9"/>
<dbReference type="OrthoDB" id="6500128at2759"/>
<dbReference type="Proteomes" id="UP000001595">
    <property type="component" value="Unplaced"/>
</dbReference>
<dbReference type="GO" id="GO:0062157">
    <property type="term" value="C:mitochondrial ATP-gated potassium channel complex"/>
    <property type="evidence" value="ECO:0000250"/>
    <property type="project" value="UniProtKB"/>
</dbReference>
<dbReference type="GO" id="GO:0005743">
    <property type="term" value="C:mitochondrial inner membrane"/>
    <property type="evidence" value="ECO:0007669"/>
    <property type="project" value="UniProtKB-SubCell"/>
</dbReference>
<dbReference type="GO" id="GO:0005739">
    <property type="term" value="C:mitochondrion"/>
    <property type="evidence" value="ECO:0000250"/>
    <property type="project" value="UniProtKB"/>
</dbReference>
<dbReference type="GO" id="GO:0015421">
    <property type="term" value="F:ABC-type oligopeptide transporter activity"/>
    <property type="evidence" value="ECO:0007669"/>
    <property type="project" value="TreeGrafter"/>
</dbReference>
<dbReference type="GO" id="GO:0005524">
    <property type="term" value="F:ATP binding"/>
    <property type="evidence" value="ECO:0000250"/>
    <property type="project" value="UniProtKB"/>
</dbReference>
<dbReference type="GO" id="GO:0016887">
    <property type="term" value="F:ATP hydrolysis activity"/>
    <property type="evidence" value="ECO:0007669"/>
    <property type="project" value="InterPro"/>
</dbReference>
<dbReference type="GO" id="GO:0090374">
    <property type="term" value="P:oligopeptide export from mitochondrion"/>
    <property type="evidence" value="ECO:0007669"/>
    <property type="project" value="TreeGrafter"/>
</dbReference>
<dbReference type="GO" id="GO:0071805">
    <property type="term" value="P:potassium ion transmembrane transport"/>
    <property type="evidence" value="ECO:0000250"/>
    <property type="project" value="UniProtKB"/>
</dbReference>
<dbReference type="CDD" id="cd18574">
    <property type="entry name" value="ABC_6TM_ABCB8_like"/>
    <property type="match status" value="1"/>
</dbReference>
<dbReference type="CDD" id="cd03249">
    <property type="entry name" value="ABC_MTABC3_MDL1_MDL2"/>
    <property type="match status" value="1"/>
</dbReference>
<dbReference type="FunFam" id="1.20.1560.10:FF:000073">
    <property type="entry name" value="ATP binding cassette subfamily B member 8"/>
    <property type="match status" value="1"/>
</dbReference>
<dbReference type="FunFam" id="3.40.50.300:FF:000403">
    <property type="entry name" value="ATP-binding cassette sub-family B member 8, mitochondrial"/>
    <property type="match status" value="1"/>
</dbReference>
<dbReference type="Gene3D" id="1.20.1560.10">
    <property type="entry name" value="ABC transporter type 1, transmembrane domain"/>
    <property type="match status" value="1"/>
</dbReference>
<dbReference type="Gene3D" id="3.40.50.300">
    <property type="entry name" value="P-loop containing nucleotide triphosphate hydrolases"/>
    <property type="match status" value="1"/>
</dbReference>
<dbReference type="InterPro" id="IPR003593">
    <property type="entry name" value="AAA+_ATPase"/>
</dbReference>
<dbReference type="InterPro" id="IPR011527">
    <property type="entry name" value="ABC1_TM_dom"/>
</dbReference>
<dbReference type="InterPro" id="IPR036640">
    <property type="entry name" value="ABC1_TM_sf"/>
</dbReference>
<dbReference type="InterPro" id="IPR003439">
    <property type="entry name" value="ABC_transporter-like_ATP-bd"/>
</dbReference>
<dbReference type="InterPro" id="IPR017871">
    <property type="entry name" value="ABC_transporter-like_CS"/>
</dbReference>
<dbReference type="InterPro" id="IPR027417">
    <property type="entry name" value="P-loop_NTPase"/>
</dbReference>
<dbReference type="InterPro" id="IPR039421">
    <property type="entry name" value="Type_1_exporter"/>
</dbReference>
<dbReference type="PANTHER" id="PTHR43394">
    <property type="entry name" value="ATP-DEPENDENT PERMEASE MDL1, MITOCHONDRIAL"/>
    <property type="match status" value="1"/>
</dbReference>
<dbReference type="PANTHER" id="PTHR43394:SF17">
    <property type="entry name" value="MITOCHONDRIAL POTASSIUM CHANNEL ATP-BINDING SUBUNIT"/>
    <property type="match status" value="1"/>
</dbReference>
<dbReference type="Pfam" id="PF00664">
    <property type="entry name" value="ABC_membrane"/>
    <property type="match status" value="1"/>
</dbReference>
<dbReference type="Pfam" id="PF00005">
    <property type="entry name" value="ABC_tran"/>
    <property type="match status" value="1"/>
</dbReference>
<dbReference type="PIRSF" id="PIRSF002773">
    <property type="entry name" value="ABC_prm/ATPase_B"/>
    <property type="match status" value="1"/>
</dbReference>
<dbReference type="SMART" id="SM00382">
    <property type="entry name" value="AAA"/>
    <property type="match status" value="1"/>
</dbReference>
<dbReference type="SUPFAM" id="SSF90123">
    <property type="entry name" value="ABC transporter transmembrane region"/>
    <property type="match status" value="1"/>
</dbReference>
<dbReference type="SUPFAM" id="SSF52540">
    <property type="entry name" value="P-loop containing nucleoside triphosphate hydrolases"/>
    <property type="match status" value="1"/>
</dbReference>
<dbReference type="PROSITE" id="PS50929">
    <property type="entry name" value="ABC_TM1F"/>
    <property type="match status" value="1"/>
</dbReference>
<dbReference type="PROSITE" id="PS00211">
    <property type="entry name" value="ABC_TRANSPORTER_1"/>
    <property type="match status" value="1"/>
</dbReference>
<dbReference type="PROSITE" id="PS50893">
    <property type="entry name" value="ABC_TRANSPORTER_2"/>
    <property type="match status" value="1"/>
</dbReference>
<keyword id="KW-0067">ATP-binding</keyword>
<keyword id="KW-0406">Ion transport</keyword>
<keyword id="KW-0472">Membrane</keyword>
<keyword id="KW-0496">Mitochondrion</keyword>
<keyword id="KW-0999">Mitochondrion inner membrane</keyword>
<keyword id="KW-0547">Nucleotide-binding</keyword>
<keyword id="KW-0630">Potassium</keyword>
<keyword id="KW-0633">Potassium transport</keyword>
<keyword id="KW-1185">Reference proteome</keyword>
<keyword id="KW-0809">Transit peptide</keyword>
<keyword id="KW-0812">Transmembrane</keyword>
<keyword id="KW-1133">Transmembrane helix</keyword>
<keyword id="KW-0813">Transport</keyword>
<comment type="function">
    <text evidence="1 2">ATP-binding subunit of the mitochondrial ATP-gated potassium channel (mitoK(ATP)). Together with pore-forming subunit CCDC51/MITOK of the mitoK(ATP) channel, mediates ATP-dependent potassium currents across the mitochondrial inner membrane. An increase in ATP intracellular levels closes the channel, inhibiting K(+) transport, whereas a decrease in ATP levels enhances K(+) uptake in the mitochondrial matrix (By similarity). Plays a role in mitochondrial iron transport (By similarity). Required for maintenance of normal cardiac function, possibly by influencing mitochondrial iron export and regulating the maturation of cytosolic iron sulfur cluster-containing enzymes (By similarity).</text>
</comment>
<comment type="activity regulation">
    <text evidence="2">Channel activity inhibited by ATP via ABCB8/MITOSUR subunit.</text>
</comment>
<comment type="subunit">
    <text evidence="2">The mitochondrial potassium channel (mitoK(ATP)) is composed of 4 subunits of CCDC51/MITOK and 4 subunits of ABCB8/MITOSUR. Physically interacts with PAAT. Interacts with Neuropilin-1 (NRP1) in mitochondria.</text>
</comment>
<comment type="subcellular location">
    <subcellularLocation>
        <location evidence="2">Mitochondrion inner membrane</location>
        <topology evidence="5">Multi-pass membrane protein</topology>
    </subcellularLocation>
</comment>
<comment type="similarity">
    <text evidence="7">Belongs to the ABC transporter superfamily. ABCB family. Multidrug resistance exporter (TC 3.A.1.201) subfamily.</text>
</comment>
<organism>
    <name type="scientific">Pongo abelii</name>
    <name type="common">Sumatran orangutan</name>
    <name type="synonym">Pongo pygmaeus abelii</name>
    <dbReference type="NCBI Taxonomy" id="9601"/>
    <lineage>
        <taxon>Eukaryota</taxon>
        <taxon>Metazoa</taxon>
        <taxon>Chordata</taxon>
        <taxon>Craniata</taxon>
        <taxon>Vertebrata</taxon>
        <taxon>Euteleostomi</taxon>
        <taxon>Mammalia</taxon>
        <taxon>Eutheria</taxon>
        <taxon>Euarchontoglires</taxon>
        <taxon>Primates</taxon>
        <taxon>Haplorrhini</taxon>
        <taxon>Catarrhini</taxon>
        <taxon>Hominidae</taxon>
        <taxon>Pongo</taxon>
    </lineage>
</organism>
<proteinExistence type="evidence at transcript level"/>
<name>MITOS_PONAB</name>
<protein>
    <recommendedName>
        <fullName evidence="7">Mitochondrial potassium channel ATP-binding subunit</fullName>
    </recommendedName>
    <alternativeName>
        <fullName evidence="2">ATP-binding cassette sub-family B member 8, mitochondrial</fullName>
        <shortName evidence="2">ABCB8</shortName>
    </alternativeName>
    <alternativeName>
        <fullName evidence="2">Mitochondrial sulfonylurea-receptor</fullName>
        <shortName evidence="2">MITOSUR</shortName>
    </alternativeName>
</protein>
<reference key="1">
    <citation type="submission" date="2004-11" db="EMBL/GenBank/DDBJ databases">
        <authorList>
            <consortium name="The German cDNA consortium"/>
        </authorList>
    </citation>
    <scope>NUCLEOTIDE SEQUENCE [LARGE SCALE MRNA]</scope>
    <source>
        <tissue>Kidney</tissue>
    </source>
</reference>
<sequence>MLVHLFRVGIRGGPFPGRLLPPLRFQTFSAVRYSDGYRSSSLFWAVAHLRSQLWAHLPRAPLAPRWSPSAWCWVGGALLGPMVLSKHPHLCLVALCEAEEATPASSTPHVVGSRFNWKLFWQFLRPHLLVLGVAVVLALGAALVNVQIPLLLGQLVEIVAKYTRDHVGSFMTESQNLSTHLLILYGVQGLLTFGYLVLLSHVGERMAVDMRRALFSSLLRQDIAFFDANKTGQLVSRLTTDVQEFKSSFKLVISQGLRSCTQVAGCLVSLSMLSTRLTLLLMLATPALMGVGTLMGSGLRKLSRQCQEQIARAMGVADEALGNVRTVRAFAMEQREEERYGAELEACRCRAEELGRGIALSQGLSNIAFNCMVLGTLFIGGSLVAGQQLTGGDLMSFLVASQTVQRSMANLSVLFGQVVRGLSAGARVFEYMALNPCIPLSGGCCVPKEQLRGSVTFQNVCFSYPCRPGFEVLKDFTLTLPPGKIVALVGQSGGGKTTVASLLERFYDPTAGVVMLDGRDLRTLDPSWLRGQVVGFISQEPVLFGTTIMENIRFGKLEASDEEVYAAAREANAHEFITSFPEGYNTIVGERGTTLSGGQKQRLAIARALIKQPTVLILDEATSALDAESERVVQEALDRASAGRTVLVIAHRLSTVRGAHRIVVMADGRVWEAGTHEELLKKGGLYAELIRRQALDAPRTAAPLPKKPEGPRNHQHKS</sequence>